<protein>
    <recommendedName>
        <fullName evidence="1">Glutamate-1-semialdehyde 2,1-aminomutase</fullName>
        <shortName evidence="1">GSA</shortName>
        <ecNumber evidence="1">5.4.3.8</ecNumber>
    </recommendedName>
    <alternativeName>
        <fullName evidence="1">Glutamate-1-semialdehyde aminotransferase</fullName>
        <shortName evidence="1">GSA-AT</shortName>
    </alternativeName>
</protein>
<evidence type="ECO:0000255" key="1">
    <source>
        <dbReference type="HAMAP-Rule" id="MF_00375"/>
    </source>
</evidence>
<dbReference type="EC" id="5.4.3.8" evidence="1"/>
<dbReference type="EMBL" id="CP000155">
    <property type="protein sequence ID" value="ABC32895.1"/>
    <property type="molecule type" value="Genomic_DNA"/>
</dbReference>
<dbReference type="RefSeq" id="WP_011399951.1">
    <property type="nucleotide sequence ID" value="NC_007645.1"/>
</dbReference>
<dbReference type="SMR" id="Q2S8X9"/>
<dbReference type="STRING" id="349521.HCH_06248"/>
<dbReference type="KEGG" id="hch:HCH_06248"/>
<dbReference type="eggNOG" id="COG0001">
    <property type="taxonomic scope" value="Bacteria"/>
</dbReference>
<dbReference type="HOGENOM" id="CLU_016922_1_5_6"/>
<dbReference type="OrthoDB" id="9801052at2"/>
<dbReference type="UniPathway" id="UPA00251">
    <property type="reaction ID" value="UER00317"/>
</dbReference>
<dbReference type="Proteomes" id="UP000000238">
    <property type="component" value="Chromosome"/>
</dbReference>
<dbReference type="GO" id="GO:0005737">
    <property type="term" value="C:cytoplasm"/>
    <property type="evidence" value="ECO:0007669"/>
    <property type="project" value="UniProtKB-SubCell"/>
</dbReference>
<dbReference type="GO" id="GO:0042286">
    <property type="term" value="F:glutamate-1-semialdehyde 2,1-aminomutase activity"/>
    <property type="evidence" value="ECO:0007669"/>
    <property type="project" value="UniProtKB-UniRule"/>
</dbReference>
<dbReference type="GO" id="GO:0030170">
    <property type="term" value="F:pyridoxal phosphate binding"/>
    <property type="evidence" value="ECO:0007669"/>
    <property type="project" value="InterPro"/>
</dbReference>
<dbReference type="GO" id="GO:0008483">
    <property type="term" value="F:transaminase activity"/>
    <property type="evidence" value="ECO:0007669"/>
    <property type="project" value="InterPro"/>
</dbReference>
<dbReference type="GO" id="GO:0006782">
    <property type="term" value="P:protoporphyrinogen IX biosynthetic process"/>
    <property type="evidence" value="ECO:0007669"/>
    <property type="project" value="UniProtKB-UniRule"/>
</dbReference>
<dbReference type="CDD" id="cd00610">
    <property type="entry name" value="OAT_like"/>
    <property type="match status" value="1"/>
</dbReference>
<dbReference type="FunFam" id="3.40.640.10:FF:000021">
    <property type="entry name" value="Glutamate-1-semialdehyde 2,1-aminomutase"/>
    <property type="match status" value="1"/>
</dbReference>
<dbReference type="Gene3D" id="3.90.1150.10">
    <property type="entry name" value="Aspartate Aminotransferase, domain 1"/>
    <property type="match status" value="1"/>
</dbReference>
<dbReference type="Gene3D" id="3.40.640.10">
    <property type="entry name" value="Type I PLP-dependent aspartate aminotransferase-like (Major domain)"/>
    <property type="match status" value="1"/>
</dbReference>
<dbReference type="HAMAP" id="MF_00375">
    <property type="entry name" value="HemL_aminotrans_3"/>
    <property type="match status" value="1"/>
</dbReference>
<dbReference type="InterPro" id="IPR004639">
    <property type="entry name" value="4pyrrol_synth_GluAld_NH2Trfase"/>
</dbReference>
<dbReference type="InterPro" id="IPR005814">
    <property type="entry name" value="Aminotrans_3"/>
</dbReference>
<dbReference type="InterPro" id="IPR049704">
    <property type="entry name" value="Aminotrans_3_PPA_site"/>
</dbReference>
<dbReference type="InterPro" id="IPR015424">
    <property type="entry name" value="PyrdxlP-dep_Trfase"/>
</dbReference>
<dbReference type="InterPro" id="IPR015421">
    <property type="entry name" value="PyrdxlP-dep_Trfase_major"/>
</dbReference>
<dbReference type="InterPro" id="IPR015422">
    <property type="entry name" value="PyrdxlP-dep_Trfase_small"/>
</dbReference>
<dbReference type="NCBIfam" id="TIGR00713">
    <property type="entry name" value="hemL"/>
    <property type="match status" value="1"/>
</dbReference>
<dbReference type="NCBIfam" id="NF000818">
    <property type="entry name" value="PRK00062.1"/>
    <property type="match status" value="1"/>
</dbReference>
<dbReference type="PANTHER" id="PTHR43713">
    <property type="entry name" value="GLUTAMATE-1-SEMIALDEHYDE 2,1-AMINOMUTASE"/>
    <property type="match status" value="1"/>
</dbReference>
<dbReference type="PANTHER" id="PTHR43713:SF3">
    <property type="entry name" value="GLUTAMATE-1-SEMIALDEHYDE 2,1-AMINOMUTASE 1, CHLOROPLASTIC-RELATED"/>
    <property type="match status" value="1"/>
</dbReference>
<dbReference type="Pfam" id="PF00202">
    <property type="entry name" value="Aminotran_3"/>
    <property type="match status" value="1"/>
</dbReference>
<dbReference type="SUPFAM" id="SSF53383">
    <property type="entry name" value="PLP-dependent transferases"/>
    <property type="match status" value="1"/>
</dbReference>
<dbReference type="PROSITE" id="PS00600">
    <property type="entry name" value="AA_TRANSFER_CLASS_3"/>
    <property type="match status" value="1"/>
</dbReference>
<keyword id="KW-0963">Cytoplasm</keyword>
<keyword id="KW-0413">Isomerase</keyword>
<keyword id="KW-0627">Porphyrin biosynthesis</keyword>
<keyword id="KW-0663">Pyridoxal phosphate</keyword>
<keyword id="KW-1185">Reference proteome</keyword>
<reference key="1">
    <citation type="journal article" date="2005" name="Nucleic Acids Res.">
        <title>Genomic blueprint of Hahella chejuensis, a marine microbe producing an algicidal agent.</title>
        <authorList>
            <person name="Jeong H."/>
            <person name="Yim J.H."/>
            <person name="Lee C."/>
            <person name="Choi S.-H."/>
            <person name="Park Y.K."/>
            <person name="Yoon S.H."/>
            <person name="Hur C.-G."/>
            <person name="Kang H.-Y."/>
            <person name="Kim D."/>
            <person name="Lee H.H."/>
            <person name="Park K.H."/>
            <person name="Park S.-H."/>
            <person name="Park H.-S."/>
            <person name="Lee H.K."/>
            <person name="Oh T.K."/>
            <person name="Kim J.F."/>
        </authorList>
    </citation>
    <scope>NUCLEOTIDE SEQUENCE [LARGE SCALE GENOMIC DNA]</scope>
    <source>
        <strain>KCTC 2396</strain>
    </source>
</reference>
<feature type="chain" id="PRO_0000243578" description="Glutamate-1-semialdehyde 2,1-aminomutase">
    <location>
        <begin position="1"/>
        <end position="426"/>
    </location>
</feature>
<feature type="modified residue" description="N6-(pyridoxal phosphate)lysine" evidence="1">
    <location>
        <position position="265"/>
    </location>
</feature>
<proteinExistence type="inferred from homology"/>
<sequence length="426" mass="45469">MTISEELFSRAQQHIPGGVNSPVRAFRGVGGAPVFFSKGEGAYLYDEDGKRYIDYVGSWGPMILGHAHPDVRQALERQLANGLGFGAPTRIEIDMAEKVCELVPSIEMVRMVNSGTEATMSAIRLARGFTGRDKIVKFEGCYHGHADSLLVKAGSGALTLGIPDSPGVPASVAEHTLTLTYNDAIMVREVFARHGDEIAAIIVEPVAGNMNCIPPEPGFLETLRAVCDEHGSLLIFDEVMTGFRVALGGAQQVYGVKPDLTTLGKVIGAGLPVGAFGGRRDVMSHIAPLGPVYQAGTLSGNPLAMACGLTMLNKISEPGFYDALAAKTEALAKGLQERAQAAGVPLTINQVGGMFGFFFSEEKKVSRFEQVTRCDLERFRKFYHGMLDKGVYLAPSAYEAGFVSAAHSDEDIQATLDAASSLFASM</sequence>
<comment type="catalytic activity">
    <reaction evidence="1">
        <text>(S)-4-amino-5-oxopentanoate = 5-aminolevulinate</text>
        <dbReference type="Rhea" id="RHEA:14265"/>
        <dbReference type="ChEBI" id="CHEBI:57501"/>
        <dbReference type="ChEBI" id="CHEBI:356416"/>
        <dbReference type="EC" id="5.4.3.8"/>
    </reaction>
</comment>
<comment type="cofactor">
    <cofactor evidence="1">
        <name>pyridoxal 5'-phosphate</name>
        <dbReference type="ChEBI" id="CHEBI:597326"/>
    </cofactor>
</comment>
<comment type="pathway">
    <text evidence="1">Porphyrin-containing compound metabolism; protoporphyrin-IX biosynthesis; 5-aminolevulinate from L-glutamyl-tRNA(Glu): step 2/2.</text>
</comment>
<comment type="subunit">
    <text evidence="1">Homodimer.</text>
</comment>
<comment type="subcellular location">
    <subcellularLocation>
        <location evidence="1">Cytoplasm</location>
    </subcellularLocation>
</comment>
<comment type="similarity">
    <text evidence="1">Belongs to the class-III pyridoxal-phosphate-dependent aminotransferase family. HemL subfamily.</text>
</comment>
<name>GSA_HAHCH</name>
<organism>
    <name type="scientific">Hahella chejuensis (strain KCTC 2396)</name>
    <dbReference type="NCBI Taxonomy" id="349521"/>
    <lineage>
        <taxon>Bacteria</taxon>
        <taxon>Pseudomonadati</taxon>
        <taxon>Pseudomonadota</taxon>
        <taxon>Gammaproteobacteria</taxon>
        <taxon>Oceanospirillales</taxon>
        <taxon>Hahellaceae</taxon>
        <taxon>Hahella</taxon>
    </lineage>
</organism>
<gene>
    <name evidence="1" type="primary">hemL</name>
    <name type="ordered locus">HCH_06248</name>
</gene>
<accession>Q2S8X9</accession>